<protein>
    <recommendedName>
        <fullName evidence="11">Dolichyl-diphosphooligosaccharide--protein glycosyltransferase subunit STT3B</fullName>
        <shortName>Oligosaccharyl transferase subunit STT3B</shortName>
        <shortName>STT3-B</shortName>
        <ecNumber>2.4.99.18</ecNumber>
    </recommendedName>
    <alternativeName>
        <fullName>B6dom1 antigen</fullName>
    </alternativeName>
    <alternativeName>
        <fullName>Source of immunodominant MHC-associated peptides</fullName>
    </alternativeName>
</protein>
<keyword id="KW-0007">Acetylation</keyword>
<keyword id="KW-0903">Direct protein sequencing</keyword>
<keyword id="KW-0256">Endoplasmic reticulum</keyword>
<keyword id="KW-0325">Glycoprotein</keyword>
<keyword id="KW-0328">Glycosyltransferase</keyword>
<keyword id="KW-0460">Magnesium</keyword>
<keyword id="KW-0464">Manganese</keyword>
<keyword id="KW-0472">Membrane</keyword>
<keyword id="KW-0479">Metal-binding</keyword>
<keyword id="KW-0597">Phosphoprotein</keyword>
<keyword id="KW-1185">Reference proteome</keyword>
<keyword id="KW-0808">Transferase</keyword>
<keyword id="KW-0812">Transmembrane</keyword>
<keyword id="KW-1133">Transmembrane helix</keyword>
<feature type="initiator methionine" description="Removed" evidence="5">
    <location>
        <position position="1"/>
    </location>
</feature>
<feature type="chain" id="PRO_0000246002" description="Dolichyl-diphosphooligosaccharide--protein glycosyltransferase subunit STT3B">
    <location>
        <begin position="2"/>
        <end position="823"/>
    </location>
</feature>
<feature type="topological domain" description="Cytoplasmic" evidence="11">
    <location>
        <begin position="2"/>
        <end position="41"/>
    </location>
</feature>
<feature type="transmembrane region" description="Helical" evidence="3">
    <location>
        <begin position="42"/>
        <end position="83"/>
    </location>
</feature>
<feature type="topological domain" description="Lumenal" evidence="11">
    <location>
        <begin position="84"/>
        <end position="170"/>
    </location>
</feature>
<feature type="transmembrane region" description="Helical" evidence="3">
    <location>
        <begin position="171"/>
        <end position="189"/>
    </location>
</feature>
<feature type="topological domain" description="Cytoplasmic" evidence="11">
    <location>
        <begin position="190"/>
        <end position="191"/>
    </location>
</feature>
<feature type="transmembrane region" description="Helical" evidence="3">
    <location>
        <begin position="192"/>
        <end position="209"/>
    </location>
</feature>
<feature type="topological domain" description="Lumenal" evidence="11">
    <location>
        <begin position="210"/>
        <end position="220"/>
    </location>
</feature>
<feature type="transmembrane region" description="Helical" evidence="3">
    <location>
        <begin position="221"/>
        <end position="240"/>
    </location>
</feature>
<feature type="topological domain" description="Cytoplasmic" evidence="11">
    <location>
        <begin position="241"/>
        <end position="242"/>
    </location>
</feature>
<feature type="transmembrane region" description="Helical" evidence="3">
    <location>
        <begin position="243"/>
        <end position="257"/>
    </location>
</feature>
<feature type="topological domain" description="Lumenal" evidence="11">
    <location>
        <begin position="258"/>
        <end position="262"/>
    </location>
</feature>
<feature type="transmembrane region" description="Helical" evidence="3">
    <location>
        <begin position="263"/>
        <end position="279"/>
    </location>
</feature>
<feature type="topological domain" description="Cytoplasmic" evidence="11">
    <location>
        <begin position="280"/>
        <end position="284"/>
    </location>
</feature>
<feature type="transmembrane region" description="Helical" evidence="3">
    <location>
        <begin position="285"/>
        <end position="310"/>
    </location>
</feature>
<feature type="topological domain" description="Lumenal" evidence="11">
    <location>
        <begin position="311"/>
        <end position="318"/>
    </location>
</feature>
<feature type="transmembrane region" description="Helical" evidence="3">
    <location>
        <begin position="319"/>
        <end position="338"/>
    </location>
</feature>
<feature type="topological domain" description="Cytoplasmic" evidence="11">
    <location>
        <begin position="339"/>
        <end position="347"/>
    </location>
</feature>
<feature type="transmembrane region" description="Helical" evidence="6">
    <location>
        <begin position="348"/>
        <end position="368"/>
    </location>
</feature>
<feature type="topological domain" description="Lumenal" evidence="11">
    <location>
        <begin position="369"/>
        <end position="407"/>
    </location>
</feature>
<feature type="transmembrane region" description="Helical" evidence="3">
    <location>
        <begin position="408"/>
        <end position="430"/>
    </location>
</feature>
<feature type="topological domain" description="Cytoplasmic" evidence="11">
    <location>
        <begin position="431"/>
        <end position="436"/>
    </location>
</feature>
<feature type="transmembrane region" description="Helical" evidence="3">
    <location>
        <begin position="437"/>
        <end position="453"/>
    </location>
</feature>
<feature type="topological domain" description="Lumenal" evidence="11">
    <location>
        <begin position="454"/>
        <end position="457"/>
    </location>
</feature>
<feature type="transmembrane region" description="Helical" evidence="3">
    <location>
        <begin position="458"/>
        <end position="479"/>
    </location>
</feature>
<feature type="topological domain" description="Cytoplasmic" evidence="11">
    <location>
        <begin position="480"/>
        <end position="523"/>
    </location>
</feature>
<feature type="transmembrane region" description="Helical" evidence="3">
    <location>
        <begin position="524"/>
        <end position="549"/>
    </location>
</feature>
<feature type="topological domain" description="Lumenal" evidence="11">
    <location>
        <begin position="550"/>
        <end position="823"/>
    </location>
</feature>
<feature type="region of interest" description="Disordered" evidence="8">
    <location>
        <begin position="1"/>
        <end position="58"/>
    </location>
</feature>
<feature type="region of interest" description="Disordered" evidence="8">
    <location>
        <begin position="487"/>
        <end position="526"/>
    </location>
</feature>
<feature type="region of interest" description="Interacts with target acceptor peptide in protein substrate" evidence="1">
    <location>
        <begin position="601"/>
        <end position="603"/>
    </location>
</feature>
<feature type="short sequence motif" description="DXD motif 1" evidence="4">
    <location>
        <begin position="98"/>
        <end position="100"/>
    </location>
</feature>
<feature type="short sequence motif" description="DXD motif 2" evidence="3">
    <location>
        <begin position="218"/>
        <end position="220"/>
    </location>
</feature>
<feature type="short sequence motif" description="SVSE motif" evidence="4">
    <location>
        <begin position="399"/>
        <end position="402"/>
    </location>
</feature>
<feature type="short sequence motif" description="WWDYG motif" evidence="3">
    <location>
        <begin position="601"/>
        <end position="605"/>
    </location>
</feature>
<feature type="short sequence motif" description="DK motif" evidence="3">
    <location>
        <begin position="668"/>
        <end position="675"/>
    </location>
</feature>
<feature type="compositionally biased region" description="Basic and acidic residues" evidence="8">
    <location>
        <begin position="517"/>
        <end position="526"/>
    </location>
</feature>
<feature type="binding site" evidence="1">
    <location>
        <position position="100"/>
    </location>
    <ligand>
        <name>Mn(2+)</name>
        <dbReference type="ChEBI" id="CHEBI:29035"/>
    </ligand>
</feature>
<feature type="binding site" evidence="1">
    <location>
        <position position="218"/>
    </location>
    <ligand>
        <name>Mn(2+)</name>
        <dbReference type="ChEBI" id="CHEBI:29035"/>
    </ligand>
</feature>
<feature type="binding site" evidence="1">
    <location>
        <position position="220"/>
    </location>
    <ligand>
        <name>Mn(2+)</name>
        <dbReference type="ChEBI" id="CHEBI:29035"/>
    </ligand>
</feature>
<feature type="binding site" evidence="1">
    <location>
        <position position="456"/>
    </location>
    <ligand>
        <name>dolichyl diphosphooligosaccharide</name>
        <dbReference type="ChEBI" id="CHEBI:57570"/>
    </ligand>
</feature>
<feature type="binding site" evidence="1">
    <location>
        <position position="606"/>
    </location>
    <ligand>
        <name>dolichyl diphosphooligosaccharide</name>
        <dbReference type="ChEBI" id="CHEBI:57570"/>
    </ligand>
</feature>
<feature type="site" description="Interacts with target acceptor peptide in protein substrate" evidence="1">
    <location>
        <position position="100"/>
    </location>
</feature>
<feature type="site" description="Important for catalytic activity" evidence="1">
    <location>
        <position position="211"/>
    </location>
</feature>
<feature type="site" description="Interacts with target acceptor peptide in protein substrate" evidence="1">
    <location>
        <position position="402"/>
    </location>
</feature>
<feature type="site" description="Interacts with target acceptor peptide in protein substrate" evidence="1">
    <location>
        <position position="671"/>
    </location>
</feature>
<feature type="modified residue" description="N-acetylalanine" evidence="5">
    <location>
        <position position="2"/>
    </location>
</feature>
<feature type="modified residue" description="Phosphoserine" evidence="15">
    <location>
        <position position="13"/>
    </location>
</feature>
<feature type="modified residue" description="Phosphoserine" evidence="5">
    <location>
        <position position="18"/>
    </location>
</feature>
<feature type="modified residue" description="Phosphoserine" evidence="15">
    <location>
        <position position="29"/>
    </location>
</feature>
<feature type="modified residue" description="Phosphoserine" evidence="13 14 15">
    <location>
        <position position="495"/>
    </location>
</feature>
<feature type="modified residue" description="Phosphoserine" evidence="13 14 15">
    <location>
        <position position="496"/>
    </location>
</feature>
<feature type="glycosylation site" description="N-linked (GlcNAc...) asparagine" evidence="7">
    <location>
        <position position="613"/>
    </location>
</feature>
<feature type="glycosylation site" description="N-linked (GlcNAc...) asparagine" evidence="7">
    <location>
        <position position="620"/>
    </location>
</feature>
<feature type="glycosylation site" description="N-linked (GlcNAc...) (high mannose) asparagine" evidence="10">
    <location>
        <position position="624"/>
    </location>
</feature>
<feature type="glycosylation site" description="N-linked (GlcNAc...) asparagine" evidence="10">
    <location>
        <position position="638"/>
    </location>
</feature>
<feature type="sequence variant" description="In strain: A.BY, B10.H7 and C3H.SW; correlated with B6dom1-negative phenotype." evidence="9">
    <original>E</original>
    <variation>D</variation>
    <location>
        <position position="776"/>
    </location>
</feature>
<feature type="sequence conflict" description="In Ref. 1; BAE41550 and 2; AAH03206." evidence="11" ref="1 2">
    <original>S</original>
    <variation>R</variation>
    <location>
        <position position="43"/>
    </location>
</feature>
<feature type="sequence conflict" description="In Ref. 1; BAE41550." evidence="11" ref="1">
    <original>T</original>
    <variation>I</variation>
    <location>
        <position position="240"/>
    </location>
</feature>
<feature type="sequence conflict" description="In Ref. 1; BAB31390." evidence="11" ref="1">
    <original>F</original>
    <variation>L</variation>
    <location>
        <position position="294"/>
    </location>
</feature>
<dbReference type="EC" id="2.4.99.18"/>
<dbReference type="EMBL" id="AK018758">
    <property type="protein sequence ID" value="BAB31390.1"/>
    <property type="molecule type" value="mRNA"/>
</dbReference>
<dbReference type="EMBL" id="AK145674">
    <property type="protein sequence ID" value="BAE26582.1"/>
    <property type="molecule type" value="mRNA"/>
</dbReference>
<dbReference type="EMBL" id="AK154979">
    <property type="protein sequence ID" value="BAE32968.1"/>
    <property type="molecule type" value="mRNA"/>
</dbReference>
<dbReference type="EMBL" id="AK152899">
    <property type="protein sequence ID" value="BAE31580.1"/>
    <property type="molecule type" value="mRNA"/>
</dbReference>
<dbReference type="EMBL" id="AK170079">
    <property type="protein sequence ID" value="BAE41550.1"/>
    <property type="molecule type" value="mRNA"/>
</dbReference>
<dbReference type="EMBL" id="BC003206">
    <property type="protein sequence ID" value="AAH03206.1"/>
    <property type="molecule type" value="mRNA"/>
</dbReference>
<dbReference type="EMBL" id="BC013054">
    <property type="protein sequence ID" value="AAH13054.2"/>
    <property type="status" value="ALT_INIT"/>
    <property type="molecule type" value="mRNA"/>
</dbReference>
<dbReference type="EMBL" id="BC052433">
    <property type="protein sequence ID" value="AAH52433.1"/>
    <property type="molecule type" value="mRNA"/>
</dbReference>
<dbReference type="CCDS" id="CCDS23599.1"/>
<dbReference type="RefSeq" id="NP_077184.2">
    <property type="nucleotide sequence ID" value="NM_024222.2"/>
</dbReference>
<dbReference type="SMR" id="Q3TDQ1"/>
<dbReference type="BioGRID" id="212788">
    <property type="interactions" value="7"/>
</dbReference>
<dbReference type="ComplexPortal" id="CPX-5822">
    <property type="entry name" value="Oligosaccharyltransferase complex B, MAGT1 variant"/>
</dbReference>
<dbReference type="ComplexPortal" id="CPX-8739">
    <property type="entry name" value="Oligosaccharyltransferase complex B, TUSC3 variant"/>
</dbReference>
<dbReference type="FunCoup" id="Q3TDQ1">
    <property type="interactions" value="2966"/>
</dbReference>
<dbReference type="STRING" id="10090.ENSMUSP00000035010"/>
<dbReference type="CAZy" id="GT66">
    <property type="family name" value="Glycosyltransferase Family 66"/>
</dbReference>
<dbReference type="GlyConnect" id="2265">
    <property type="glycosylation" value="3 N-Linked glycans (2 sites)"/>
</dbReference>
<dbReference type="GlyCosmos" id="Q3TDQ1">
    <property type="glycosylation" value="4 sites, 2 glycans"/>
</dbReference>
<dbReference type="GlyGen" id="Q3TDQ1">
    <property type="glycosylation" value="5 sites, 8 N-linked glycans (5 sites)"/>
</dbReference>
<dbReference type="iPTMnet" id="Q3TDQ1"/>
<dbReference type="PhosphoSitePlus" id="Q3TDQ1"/>
<dbReference type="SwissPalm" id="Q3TDQ1"/>
<dbReference type="jPOST" id="Q3TDQ1"/>
<dbReference type="PaxDb" id="10090-ENSMUSP00000035010"/>
<dbReference type="PeptideAtlas" id="Q3TDQ1"/>
<dbReference type="ProteomicsDB" id="258767"/>
<dbReference type="Pumba" id="Q3TDQ1"/>
<dbReference type="DNASU" id="68292"/>
<dbReference type="GeneID" id="68292"/>
<dbReference type="KEGG" id="mmu:68292"/>
<dbReference type="UCSC" id="uc009ryp.1">
    <property type="organism name" value="mouse"/>
</dbReference>
<dbReference type="AGR" id="MGI:1915542"/>
<dbReference type="CTD" id="201595"/>
<dbReference type="MGI" id="MGI:1915542">
    <property type="gene designation" value="Stt3b"/>
</dbReference>
<dbReference type="eggNOG" id="KOG2292">
    <property type="taxonomic scope" value="Eukaryota"/>
</dbReference>
<dbReference type="InParanoid" id="Q3TDQ1"/>
<dbReference type="OrthoDB" id="10261066at2759"/>
<dbReference type="PhylomeDB" id="Q3TDQ1"/>
<dbReference type="TreeFam" id="TF300822"/>
<dbReference type="UniPathway" id="UPA00378"/>
<dbReference type="BioGRID-ORCS" id="68292">
    <property type="hits" value="16 hits in 82 CRISPR screens"/>
</dbReference>
<dbReference type="ChiTaRS" id="Stt3b">
    <property type="organism name" value="mouse"/>
</dbReference>
<dbReference type="PRO" id="PR:Q3TDQ1"/>
<dbReference type="Proteomes" id="UP000000589">
    <property type="component" value="Unplaced"/>
</dbReference>
<dbReference type="RNAct" id="Q3TDQ1">
    <property type="molecule type" value="protein"/>
</dbReference>
<dbReference type="GO" id="GO:0005789">
    <property type="term" value="C:endoplasmic reticulum membrane"/>
    <property type="evidence" value="ECO:0000303"/>
    <property type="project" value="ComplexPortal"/>
</dbReference>
<dbReference type="GO" id="GO:0008250">
    <property type="term" value="C:oligosaccharyltransferase complex"/>
    <property type="evidence" value="ECO:0000250"/>
    <property type="project" value="UniProtKB"/>
</dbReference>
<dbReference type="GO" id="GO:0032991">
    <property type="term" value="C:protein-containing complex"/>
    <property type="evidence" value="ECO:0000266"/>
    <property type="project" value="MGI"/>
</dbReference>
<dbReference type="GO" id="GO:0004579">
    <property type="term" value="F:dolichyl-diphosphooligosaccharide-protein glycotransferase activity"/>
    <property type="evidence" value="ECO:0000250"/>
    <property type="project" value="UniProtKB"/>
</dbReference>
<dbReference type="GO" id="GO:0046872">
    <property type="term" value="F:metal ion binding"/>
    <property type="evidence" value="ECO:0007669"/>
    <property type="project" value="UniProtKB-KW"/>
</dbReference>
<dbReference type="GO" id="GO:0043686">
    <property type="term" value="P:co-translational protein modification"/>
    <property type="evidence" value="ECO:0000250"/>
    <property type="project" value="UniProtKB"/>
</dbReference>
<dbReference type="GO" id="GO:0036503">
    <property type="term" value="P:ERAD pathway"/>
    <property type="evidence" value="ECO:0000250"/>
    <property type="project" value="UniProtKB"/>
</dbReference>
<dbReference type="GO" id="GO:0006516">
    <property type="term" value="P:glycoprotein catabolic process"/>
    <property type="evidence" value="ECO:0000250"/>
    <property type="project" value="UniProtKB"/>
</dbReference>
<dbReference type="GO" id="GO:0043687">
    <property type="term" value="P:post-translational protein modification"/>
    <property type="evidence" value="ECO:0000250"/>
    <property type="project" value="UniProtKB"/>
</dbReference>
<dbReference type="GO" id="GO:0006487">
    <property type="term" value="P:protein N-linked glycosylation"/>
    <property type="evidence" value="ECO:0000303"/>
    <property type="project" value="ComplexPortal"/>
</dbReference>
<dbReference type="GO" id="GO:0018279">
    <property type="term" value="P:protein N-linked glycosylation via asparagine"/>
    <property type="evidence" value="ECO:0000250"/>
    <property type="project" value="UniProtKB"/>
</dbReference>
<dbReference type="GO" id="GO:0006986">
    <property type="term" value="P:response to unfolded protein"/>
    <property type="evidence" value="ECO:0000250"/>
    <property type="project" value="UniProtKB"/>
</dbReference>
<dbReference type="FunFam" id="3.40.50.12610:FF:000001">
    <property type="entry name" value="Dolichyl-diphosphooligosaccharide--protein glycosyltransferase subunit STT3B"/>
    <property type="match status" value="1"/>
</dbReference>
<dbReference type="Gene3D" id="3.40.50.12610">
    <property type="match status" value="1"/>
</dbReference>
<dbReference type="InterPro" id="IPR003674">
    <property type="entry name" value="Oligo_trans_STT3"/>
</dbReference>
<dbReference type="InterPro" id="IPR048999">
    <property type="entry name" value="STT3-PglB_core"/>
</dbReference>
<dbReference type="InterPro" id="IPR048307">
    <property type="entry name" value="STT3_N"/>
</dbReference>
<dbReference type="PANTHER" id="PTHR13872">
    <property type="entry name" value="DOLICHYL-DIPHOSPHOOLIGOSACCHARIDE--PROTEIN GLYCOSYLTRANSFERASE SUBUNIT"/>
    <property type="match status" value="1"/>
</dbReference>
<dbReference type="PANTHER" id="PTHR13872:SF1">
    <property type="entry name" value="DOLICHYL-DIPHOSPHOOLIGOSACCHARIDE--PROTEIN GLYCOSYLTRANSFERASE SUBUNIT STT3B"/>
    <property type="match status" value="1"/>
</dbReference>
<dbReference type="Pfam" id="PF02516">
    <property type="entry name" value="STT3"/>
    <property type="match status" value="1"/>
</dbReference>
<dbReference type="Pfam" id="PF21436">
    <property type="entry name" value="STT3-PglB_core"/>
    <property type="match status" value="1"/>
</dbReference>
<sequence>MAEPSAPESKHKSSLNSSPWSGLMALGNSRHGHHGPGTQSASSAAAPKPGPPAGLSGGLSQPAGWQSLLSFTILFLAWLAGFSSRLFAVIRFESIIHEFDPWFNYRSTHHLASHGFYEFLNWFDERAWYPLGRIVGGTVYPGLMITAGLIHWILNTLNITVHIRDVCVFLAPTFSGLTSISTFLLTRELWNQGAGLLAACFIAIVPGYISRSVAGSFDNEGIAIFALQFTYYLWVKSVKTGSVFWTMCCCLSYFYMVSAWGGYVFIINLIPLHVFVLLLMQRYSKRVYIAYSTFYIVGLILSMQIPFVGFQPIRTSEHMAAAGVFALLQAYAFLQYLRDRLTKQEFQTLFFLGVSLAAGAVFLSVIYLTYTGYIAPWSGRFYSLWDTGYAKIHIPIIASVSEHQPTTWVSFFFDLHILVCTFPAGLWFCIKNINDERVFVALYAISAVYFAGVMVRLMLTLTPVVCMLSAIAFSNVFEHYLGDDMKRENPPVEDSSDEDDKRNPGNLYDKAGKVRKHVTEQEKPEEGLGPNIKSIVTMLMLMLLMMFAVHCTWVTSNAYSSPSVVLASYNHDGTRNILDDFREAYFWLRQNTDEHARVMSWWDYGYQIAGMANRTTLVDNNTWNNSHIALVGKAMSSNETAAYKIMRSLDVDYVLVIFGGVIGYSGDDINKFLWMVRIAEGEHPKDIREGDYFTQQGEFRVDKAGSPTLLNCLMYKMSYYRFGEMQLDFRTPPGFDRTRNAEIGNKDIKFKHLEEAFTSEHWLVRIYKVKAPDNRETLGHKPRVTNIVPKQKYLSKKTTKRKRGYVKNKLVFKKGKKTSKKTV</sequence>
<comment type="function">
    <text evidence="2 3 5">Catalytic subunit of the oligosaccharyl transferase (OST) complex that catalyzes the initial transfer of a defined glycan (Glc(3)Man(9)GlcNAc(2) in eukaryotes) from the lipid carrier dolichol-pyrophosphate to an asparagine residue within an Asn-X-Ser/Thr consensus motif in nascent polypeptide chains, the first step in protein N-glycosylation (By similarity). N-glycosylation occurs cotranslationally and the complex associates with the Sec61 complex at the channel-forming translocon complex that mediates protein translocation across the endoplasmic reticulum (ER). All subunits are required for a maximal enzyme activity. This subunit contains the active site and the acceptor peptide and donor lipid-linked oligosaccharide (LLO) binding pockets (By similarity). STT3B is present in a small subset of OST complexes and mediates both cotranslational and post-translational N-glycosylation of target proteins: STT3B-containing complexes are required for efficient post-translational glycosylation and while they are less competent than STT3A-containing complexes for cotranslational glycosylation, they have the ability to mediate glycosylation of some nascent sites that are not accessible for STT3A. STT3B-containing complexes also act post-translationally and mediate modification of skipped glycosylation sites in unfolded proteins. Plays a role in ER-associated degradation (ERAD) pathway that mediates ubiquitin-dependent degradation of misfolded endoplasmic reticulum proteins by mediating N-glycosylation of unfolded proteins, which are then recognized by the ERAD pathway and targeted for degradation (By similarity).</text>
</comment>
<comment type="catalytic activity">
    <reaction evidence="3">
        <text>a di-trans,poly-cis-dolichyl diphosphooligosaccharide + L-asparaginyl-[protein] = N(4)-(oligosaccharide-(1-&gt;4)-N-acetyl-beta-D-glucosaminyl-(1-&gt;4)-N-acetyl-beta-D-glucosaminyl)-L-asparaginyl-[protein] + a di-trans,poly-cis-dolichyl diphosphate + H(+)</text>
        <dbReference type="Rhea" id="RHEA:22980"/>
        <dbReference type="Rhea" id="RHEA-COMP:12804"/>
        <dbReference type="Rhea" id="RHEA-COMP:12805"/>
        <dbReference type="Rhea" id="RHEA-COMP:19506"/>
        <dbReference type="Rhea" id="RHEA-COMP:19509"/>
        <dbReference type="ChEBI" id="CHEBI:15378"/>
        <dbReference type="ChEBI" id="CHEBI:50347"/>
        <dbReference type="ChEBI" id="CHEBI:57497"/>
        <dbReference type="ChEBI" id="CHEBI:57570"/>
        <dbReference type="ChEBI" id="CHEBI:132529"/>
        <dbReference type="EC" id="2.4.99.18"/>
    </reaction>
</comment>
<comment type="cofactor">
    <cofactor evidence="5">
        <name>Mg(2+)</name>
        <dbReference type="ChEBI" id="CHEBI:18420"/>
    </cofactor>
    <cofactor evidence="1">
        <name>Mn(2+)</name>
        <dbReference type="ChEBI" id="CHEBI:29035"/>
    </cofactor>
</comment>
<comment type="pathway">
    <text evidence="5">Protein modification; protein glycosylation.</text>
</comment>
<comment type="subunit">
    <text evidence="5">Component of the oligosaccharyltransferase (OST) complex. There are 2 OST complexes, OST-A and OST-B, which contain STT3A or STT3B as catalytic subunit, respectively. OST-A and OST-B contain common core subunits RPN1, RPN2, OST48, OST4, DAD1 and TMEM258, and OST-B contains either MAGT1 or TUSC3 as specific accessory subunit.</text>
</comment>
<comment type="subcellular location">
    <subcellularLocation>
        <location evidence="5">Endoplasmic reticulum membrane</location>
        <topology evidence="3">Multi-pass membrane protein</topology>
    </subcellularLocation>
</comment>
<comment type="domain">
    <text evidence="3">Despite low primary sequence conservation between eukaryotic catalytic subunits and bacterial and archaeal single subunit OSTs (ssOST), structural comparison revealed several common motifs at spatially equivalent positions, like the DXD motif 1 on the external loop 1 and the DXD motif 2 on the external loop 2 involved in binding of the metal ion cofactor and the carboxamide group of the acceptor asparagine, the conserved Glu residue of the TIXE/SVSE motif on the external loop 5 involved in catalysis, as well as the WWDYG and the DK/MI motifs in the globular domain that define the binding pocket for the +2 Ser/Thr of the acceptor sequon. In bacterial ssOSTs, an Arg residue was found to interact with a negatively charged side chain at the -2 position of the sequon. This Arg is conserved in bacterial enzymes and correlates with an extended sequon requirement (Asp-X-Asn-X-Ser/Thr) for bacterial N-glycosylation.</text>
</comment>
<comment type="polymorphism">
    <text>In strains 129, C57BL/10, C57BL/6 and LP Glu-776 correlates with a B6dom1-positive phenotype, Asp-776 is found in resistant strains. The B6dom1 minor histocompatibility antigen (MiHA) is used as a model antigen in studying immunodominance.</text>
</comment>
<comment type="similarity">
    <text evidence="11">Belongs to the STT3 family.</text>
</comment>
<comment type="sequence caution" evidence="11">
    <conflict type="erroneous initiation">
        <sequence resource="EMBL-CDS" id="AAH13054"/>
    </conflict>
</comment>
<reference key="1">
    <citation type="journal article" date="2005" name="Science">
        <title>The transcriptional landscape of the mammalian genome.</title>
        <authorList>
            <person name="Carninci P."/>
            <person name="Kasukawa T."/>
            <person name="Katayama S."/>
            <person name="Gough J."/>
            <person name="Frith M.C."/>
            <person name="Maeda N."/>
            <person name="Oyama R."/>
            <person name="Ravasi T."/>
            <person name="Lenhard B."/>
            <person name="Wells C."/>
            <person name="Kodzius R."/>
            <person name="Shimokawa K."/>
            <person name="Bajic V.B."/>
            <person name="Brenner S.E."/>
            <person name="Batalov S."/>
            <person name="Forrest A.R."/>
            <person name="Zavolan M."/>
            <person name="Davis M.J."/>
            <person name="Wilming L.G."/>
            <person name="Aidinis V."/>
            <person name="Allen J.E."/>
            <person name="Ambesi-Impiombato A."/>
            <person name="Apweiler R."/>
            <person name="Aturaliya R.N."/>
            <person name="Bailey T.L."/>
            <person name="Bansal M."/>
            <person name="Baxter L."/>
            <person name="Beisel K.W."/>
            <person name="Bersano T."/>
            <person name="Bono H."/>
            <person name="Chalk A.M."/>
            <person name="Chiu K.P."/>
            <person name="Choudhary V."/>
            <person name="Christoffels A."/>
            <person name="Clutterbuck D.R."/>
            <person name="Crowe M.L."/>
            <person name="Dalla E."/>
            <person name="Dalrymple B.P."/>
            <person name="de Bono B."/>
            <person name="Della Gatta G."/>
            <person name="di Bernardo D."/>
            <person name="Down T."/>
            <person name="Engstrom P."/>
            <person name="Fagiolini M."/>
            <person name="Faulkner G."/>
            <person name="Fletcher C.F."/>
            <person name="Fukushima T."/>
            <person name="Furuno M."/>
            <person name="Futaki S."/>
            <person name="Gariboldi M."/>
            <person name="Georgii-Hemming P."/>
            <person name="Gingeras T.R."/>
            <person name="Gojobori T."/>
            <person name="Green R.E."/>
            <person name="Gustincich S."/>
            <person name="Harbers M."/>
            <person name="Hayashi Y."/>
            <person name="Hensch T.K."/>
            <person name="Hirokawa N."/>
            <person name="Hill D."/>
            <person name="Huminiecki L."/>
            <person name="Iacono M."/>
            <person name="Ikeo K."/>
            <person name="Iwama A."/>
            <person name="Ishikawa T."/>
            <person name="Jakt M."/>
            <person name="Kanapin A."/>
            <person name="Katoh M."/>
            <person name="Kawasawa Y."/>
            <person name="Kelso J."/>
            <person name="Kitamura H."/>
            <person name="Kitano H."/>
            <person name="Kollias G."/>
            <person name="Krishnan S.P."/>
            <person name="Kruger A."/>
            <person name="Kummerfeld S.K."/>
            <person name="Kurochkin I.V."/>
            <person name="Lareau L.F."/>
            <person name="Lazarevic D."/>
            <person name="Lipovich L."/>
            <person name="Liu J."/>
            <person name="Liuni S."/>
            <person name="McWilliam S."/>
            <person name="Madan Babu M."/>
            <person name="Madera M."/>
            <person name="Marchionni L."/>
            <person name="Matsuda H."/>
            <person name="Matsuzawa S."/>
            <person name="Miki H."/>
            <person name="Mignone F."/>
            <person name="Miyake S."/>
            <person name="Morris K."/>
            <person name="Mottagui-Tabar S."/>
            <person name="Mulder N."/>
            <person name="Nakano N."/>
            <person name="Nakauchi H."/>
            <person name="Ng P."/>
            <person name="Nilsson R."/>
            <person name="Nishiguchi S."/>
            <person name="Nishikawa S."/>
            <person name="Nori F."/>
            <person name="Ohara O."/>
            <person name="Okazaki Y."/>
            <person name="Orlando V."/>
            <person name="Pang K.C."/>
            <person name="Pavan W.J."/>
            <person name="Pavesi G."/>
            <person name="Pesole G."/>
            <person name="Petrovsky N."/>
            <person name="Piazza S."/>
            <person name="Reed J."/>
            <person name="Reid J.F."/>
            <person name="Ring B.Z."/>
            <person name="Ringwald M."/>
            <person name="Rost B."/>
            <person name="Ruan Y."/>
            <person name="Salzberg S.L."/>
            <person name="Sandelin A."/>
            <person name="Schneider C."/>
            <person name="Schoenbach C."/>
            <person name="Sekiguchi K."/>
            <person name="Semple C.A."/>
            <person name="Seno S."/>
            <person name="Sessa L."/>
            <person name="Sheng Y."/>
            <person name="Shibata Y."/>
            <person name="Shimada H."/>
            <person name="Shimada K."/>
            <person name="Silva D."/>
            <person name="Sinclair B."/>
            <person name="Sperling S."/>
            <person name="Stupka E."/>
            <person name="Sugiura K."/>
            <person name="Sultana R."/>
            <person name="Takenaka Y."/>
            <person name="Taki K."/>
            <person name="Tammoja K."/>
            <person name="Tan S.L."/>
            <person name="Tang S."/>
            <person name="Taylor M.S."/>
            <person name="Tegner J."/>
            <person name="Teichmann S.A."/>
            <person name="Ueda H.R."/>
            <person name="van Nimwegen E."/>
            <person name="Verardo R."/>
            <person name="Wei C.L."/>
            <person name="Yagi K."/>
            <person name="Yamanishi H."/>
            <person name="Zabarovsky E."/>
            <person name="Zhu S."/>
            <person name="Zimmer A."/>
            <person name="Hide W."/>
            <person name="Bult C."/>
            <person name="Grimmond S.M."/>
            <person name="Teasdale R.D."/>
            <person name="Liu E.T."/>
            <person name="Brusic V."/>
            <person name="Quackenbush J."/>
            <person name="Wahlestedt C."/>
            <person name="Mattick J.S."/>
            <person name="Hume D.A."/>
            <person name="Kai C."/>
            <person name="Sasaki D."/>
            <person name="Tomaru Y."/>
            <person name="Fukuda S."/>
            <person name="Kanamori-Katayama M."/>
            <person name="Suzuki M."/>
            <person name="Aoki J."/>
            <person name="Arakawa T."/>
            <person name="Iida J."/>
            <person name="Imamura K."/>
            <person name="Itoh M."/>
            <person name="Kato T."/>
            <person name="Kawaji H."/>
            <person name="Kawagashira N."/>
            <person name="Kawashima T."/>
            <person name="Kojima M."/>
            <person name="Kondo S."/>
            <person name="Konno H."/>
            <person name="Nakano K."/>
            <person name="Ninomiya N."/>
            <person name="Nishio T."/>
            <person name="Okada M."/>
            <person name="Plessy C."/>
            <person name="Shibata K."/>
            <person name="Shiraki T."/>
            <person name="Suzuki S."/>
            <person name="Tagami M."/>
            <person name="Waki K."/>
            <person name="Watahiki A."/>
            <person name="Okamura-Oho Y."/>
            <person name="Suzuki H."/>
            <person name="Kawai J."/>
            <person name="Hayashizaki Y."/>
        </authorList>
    </citation>
    <scope>NUCLEOTIDE SEQUENCE [LARGE SCALE MRNA]</scope>
    <source>
        <strain>C57BL/6J</strain>
        <strain>NOD</strain>
        <tissue>Bone marrow</tissue>
        <tissue>Liver</tissue>
    </source>
</reference>
<reference key="2">
    <citation type="journal article" date="2004" name="Genome Res.">
        <title>The status, quality, and expansion of the NIH full-length cDNA project: the Mammalian Gene Collection (MGC).</title>
        <authorList>
            <consortium name="The MGC Project Team"/>
        </authorList>
    </citation>
    <scope>NUCLEOTIDE SEQUENCE [LARGE SCALE MRNA]</scope>
    <source>
        <strain>C57BL/6J</strain>
        <strain>Czech II</strain>
        <strain>FVB/N</strain>
        <tissue>Brain</tissue>
        <tissue>Mammary gland</tissue>
        <tissue>Mammary tumor</tissue>
    </source>
</reference>
<reference key="3">
    <citation type="journal article" date="2002" name="Immunogenetics">
        <title>The model B6dom1 minor histocompatibility antigen is encoded by a mouse homolog of the yeast STT3 gene.</title>
        <authorList>
            <person name="McBride K."/>
            <person name="Baron C."/>
            <person name="Picard S."/>
            <person name="Martin S."/>
            <person name="Boismenu D."/>
            <person name="Bell A."/>
            <person name="Bergeron J."/>
            <person name="Perreault C."/>
        </authorList>
    </citation>
    <scope>PROTEIN SEQUENCE OF 770-778</scope>
    <scope>VARIANT ASP-776</scope>
    <source>
        <strain>C57BL/6J</strain>
    </source>
</reference>
<reference key="4">
    <citation type="journal article" date="2007" name="Proc. Natl. Acad. Sci. U.S.A.">
        <title>Large-scale phosphorylation analysis of mouse liver.</title>
        <authorList>
            <person name="Villen J."/>
            <person name="Beausoleil S.A."/>
            <person name="Gerber S.A."/>
            <person name="Gygi S.P."/>
        </authorList>
    </citation>
    <scope>PHOSPHORYLATION [LARGE SCALE ANALYSIS] AT SER-495 AND SER-496</scope>
    <scope>IDENTIFICATION BY MASS SPECTROMETRY [LARGE SCALE ANALYSIS]</scope>
    <source>
        <tissue>Liver</tissue>
    </source>
</reference>
<reference key="5">
    <citation type="journal article" date="2009" name="Mol. Cell. Proteomics">
        <title>Large scale localization of protein phosphorylation by use of electron capture dissociation mass spectrometry.</title>
        <authorList>
            <person name="Sweet S.M."/>
            <person name="Bailey C.M."/>
            <person name="Cunningham D.L."/>
            <person name="Heath J.K."/>
            <person name="Cooper H.J."/>
        </authorList>
    </citation>
    <scope>PHOSPHORYLATION [LARGE SCALE ANALYSIS] AT SER-495 AND SER-496</scope>
    <scope>IDENTIFICATION BY MASS SPECTROMETRY [LARGE SCALE ANALYSIS]</scope>
    <source>
        <tissue>Embryonic fibroblast</tissue>
    </source>
</reference>
<reference key="6">
    <citation type="journal article" date="2009" name="Nat. Biotechnol.">
        <title>Mass-spectrometric identification and relative quantification of N-linked cell surface glycoproteins.</title>
        <authorList>
            <person name="Wollscheid B."/>
            <person name="Bausch-Fluck D."/>
            <person name="Henderson C."/>
            <person name="O'Brien R."/>
            <person name="Bibel M."/>
            <person name="Schiess R."/>
            <person name="Aebersold R."/>
            <person name="Watts J.D."/>
        </authorList>
    </citation>
    <scope>GLYCOSYLATION [LARGE SCALE ANALYSIS] AT ASN-624 AND ASN-638</scope>
</reference>
<reference key="7">
    <citation type="journal article" date="2010" name="Cell">
        <title>A tissue-specific atlas of mouse protein phosphorylation and expression.</title>
        <authorList>
            <person name="Huttlin E.L."/>
            <person name="Jedrychowski M.P."/>
            <person name="Elias J.E."/>
            <person name="Goswami T."/>
            <person name="Rad R."/>
            <person name="Beausoleil S.A."/>
            <person name="Villen J."/>
            <person name="Haas W."/>
            <person name="Sowa M.E."/>
            <person name="Gygi S.P."/>
        </authorList>
    </citation>
    <scope>PHOSPHORYLATION [LARGE SCALE ANALYSIS] AT SER-13; SER-29; SER-495 AND SER-496</scope>
    <scope>IDENTIFICATION BY MASS SPECTROMETRY [LARGE SCALE ANALYSIS]</scope>
    <source>
        <tissue>Brain</tissue>
        <tissue>Brown adipose tissue</tissue>
        <tissue>Heart</tissue>
        <tissue>Kidney</tissue>
        <tissue>Liver</tissue>
        <tissue>Lung</tissue>
        <tissue>Pancreas</tissue>
        <tissue>Spleen</tissue>
        <tissue>Testis</tissue>
    </source>
</reference>
<accession>Q3TDQ1</accession>
<accession>Q7TT24</accession>
<accession>Q921E3</accession>
<accession>Q99LL0</accession>
<accession>Q9D2V2</accession>
<organism>
    <name type="scientific">Mus musculus</name>
    <name type="common">Mouse</name>
    <dbReference type="NCBI Taxonomy" id="10090"/>
    <lineage>
        <taxon>Eukaryota</taxon>
        <taxon>Metazoa</taxon>
        <taxon>Chordata</taxon>
        <taxon>Craniata</taxon>
        <taxon>Vertebrata</taxon>
        <taxon>Euteleostomi</taxon>
        <taxon>Mammalia</taxon>
        <taxon>Eutheria</taxon>
        <taxon>Euarchontoglires</taxon>
        <taxon>Glires</taxon>
        <taxon>Rodentia</taxon>
        <taxon>Myomorpha</taxon>
        <taxon>Muroidea</taxon>
        <taxon>Muridae</taxon>
        <taxon>Murinae</taxon>
        <taxon>Mus</taxon>
        <taxon>Mus</taxon>
    </lineage>
</organism>
<evidence type="ECO:0000250" key="1">
    <source>
        <dbReference type="UniProtKB" id="B9KDD4"/>
    </source>
</evidence>
<evidence type="ECO:0000250" key="2">
    <source>
        <dbReference type="UniProtKB" id="E2RG47"/>
    </source>
</evidence>
<evidence type="ECO:0000250" key="3">
    <source>
        <dbReference type="UniProtKB" id="P39007"/>
    </source>
</evidence>
<evidence type="ECO:0000250" key="4">
    <source>
        <dbReference type="UniProtKB" id="Q5HTX9"/>
    </source>
</evidence>
<evidence type="ECO:0000250" key="5">
    <source>
        <dbReference type="UniProtKB" id="Q8TCJ2"/>
    </source>
</evidence>
<evidence type="ECO:0000255" key="6"/>
<evidence type="ECO:0000255" key="7">
    <source>
        <dbReference type="PROSITE-ProRule" id="PRU00498"/>
    </source>
</evidence>
<evidence type="ECO:0000256" key="8">
    <source>
        <dbReference type="SAM" id="MobiDB-lite"/>
    </source>
</evidence>
<evidence type="ECO:0000269" key="9">
    <source>
    </source>
</evidence>
<evidence type="ECO:0000269" key="10">
    <source>
    </source>
</evidence>
<evidence type="ECO:0000305" key="11"/>
<evidence type="ECO:0000312" key="12">
    <source>
        <dbReference type="MGI" id="MGI:1915542"/>
    </source>
</evidence>
<evidence type="ECO:0007744" key="13">
    <source>
    </source>
</evidence>
<evidence type="ECO:0007744" key="14">
    <source>
    </source>
</evidence>
<evidence type="ECO:0007744" key="15">
    <source>
    </source>
</evidence>
<gene>
    <name evidence="12" type="primary">Stt3b</name>
    <name type="synonym">Simp</name>
</gene>
<name>STT3B_MOUSE</name>
<proteinExistence type="evidence at protein level"/>